<feature type="initiator methionine" description="Removed" evidence="2">
    <location>
        <position position="1"/>
    </location>
</feature>
<feature type="chain" id="PRO_0000187880" description="Thiol peroxidase">
    <location>
        <begin position="2"/>
        <end position="165"/>
    </location>
</feature>
<feature type="domain" description="Thioredoxin" evidence="1">
    <location>
        <begin position="17"/>
        <end position="165"/>
    </location>
</feature>
<feature type="active site" description="Cysteine sulfenic acid (-SOH) intermediate" evidence="1">
    <location>
        <position position="59"/>
    </location>
</feature>
<feature type="disulfide bond" evidence="3 5">
    <location>
        <begin position="59"/>
        <end position="93"/>
    </location>
</feature>
<feature type="disulfide bond" description="Redox-active" evidence="1">
    <location>
        <begin position="59"/>
        <end position="93"/>
    </location>
</feature>
<feature type="strand" evidence="6">
    <location>
        <begin position="3"/>
        <end position="5"/>
    </location>
</feature>
<feature type="strand" evidence="6">
    <location>
        <begin position="8"/>
        <end position="10"/>
    </location>
</feature>
<feature type="strand" evidence="6">
    <location>
        <begin position="12"/>
        <end position="14"/>
    </location>
</feature>
<feature type="strand" evidence="6">
    <location>
        <begin position="27"/>
        <end position="29"/>
    </location>
</feature>
<feature type="strand" evidence="6">
    <location>
        <begin position="35"/>
        <end position="37"/>
    </location>
</feature>
<feature type="helix" evidence="6">
    <location>
        <begin position="38"/>
        <end position="41"/>
    </location>
</feature>
<feature type="strand" evidence="6">
    <location>
        <begin position="44"/>
        <end position="50"/>
    </location>
</feature>
<feature type="helix" evidence="6">
    <location>
        <begin position="61"/>
        <end position="72"/>
    </location>
</feature>
<feature type="strand" evidence="6">
    <location>
        <begin position="76"/>
        <end position="84"/>
    </location>
</feature>
<feature type="helix" evidence="6">
    <location>
        <begin position="86"/>
        <end position="89"/>
    </location>
</feature>
<feature type="turn" evidence="6">
    <location>
        <begin position="93"/>
        <end position="97"/>
    </location>
</feature>
<feature type="strand" evidence="6">
    <location>
        <begin position="101"/>
        <end position="105"/>
    </location>
</feature>
<feature type="helix" evidence="6">
    <location>
        <begin position="111"/>
        <end position="115"/>
    </location>
</feature>
<feature type="turn" evidence="6">
    <location>
        <begin position="124"/>
        <end position="127"/>
    </location>
</feature>
<feature type="strand" evidence="6">
    <location>
        <begin position="132"/>
        <end position="136"/>
    </location>
</feature>
<feature type="strand" evidence="6">
    <location>
        <begin position="140"/>
        <end position="147"/>
    </location>
</feature>
<feature type="helix" evidence="6">
    <location>
        <begin position="157"/>
        <end position="162"/>
    </location>
</feature>
<name>TPX_HAEIN</name>
<sequence>MTVTLAGNPIEVGGHFPQVGEIVENFILVGNDLADVALNDFASKRKVLNIFPSIDTGVCATSVRKFNQQAAKLSNTIVLCISADLPFAQARFCGAEGIENAKTVSTFRNHALHSQLGVDIQTGPLAGLTSRAVIVLDEQNNVLHSQLVEEIKEEPNYEAALAVLA</sequence>
<proteinExistence type="evidence at protein level"/>
<accession>Q57549</accession>
<organism>
    <name type="scientific">Haemophilus influenzae (strain ATCC 51907 / DSM 11121 / KW20 / Rd)</name>
    <dbReference type="NCBI Taxonomy" id="71421"/>
    <lineage>
        <taxon>Bacteria</taxon>
        <taxon>Pseudomonadati</taxon>
        <taxon>Pseudomonadota</taxon>
        <taxon>Gammaproteobacteria</taxon>
        <taxon>Pasteurellales</taxon>
        <taxon>Pasteurellaceae</taxon>
        <taxon>Haemophilus</taxon>
    </lineage>
</organism>
<protein>
    <recommendedName>
        <fullName evidence="1">Thiol peroxidase</fullName>
        <shortName evidence="1">Tpx</shortName>
        <ecNumber evidence="1 2">1.11.1.24</ecNumber>
    </recommendedName>
    <alternativeName>
        <fullName evidence="1">Peroxiredoxin tpx</fullName>
        <shortName evidence="1">Prx</shortName>
    </alternativeName>
    <alternativeName>
        <fullName evidence="4">Scavengase p20</fullName>
    </alternativeName>
    <alternativeName>
        <fullName evidence="1">Thioredoxin peroxidase</fullName>
    </alternativeName>
    <alternativeName>
        <fullName evidence="1">Thioredoxin-dependent peroxiredoxin</fullName>
    </alternativeName>
</protein>
<evidence type="ECO:0000255" key="1">
    <source>
        <dbReference type="HAMAP-Rule" id="MF_00269"/>
    </source>
</evidence>
<evidence type="ECO:0000269" key="2">
    <source>
    </source>
</evidence>
<evidence type="ECO:0000269" key="3">
    <source ref="3"/>
</evidence>
<evidence type="ECO:0000303" key="4">
    <source>
    </source>
</evidence>
<evidence type="ECO:0007744" key="5">
    <source>
        <dbReference type="PDB" id="1Q98"/>
    </source>
</evidence>
<evidence type="ECO:0007829" key="6">
    <source>
        <dbReference type="PDB" id="1Q98"/>
    </source>
</evidence>
<dbReference type="EC" id="1.11.1.24" evidence="1 2"/>
<dbReference type="EMBL" id="L42023">
    <property type="protein sequence ID" value="AAC22410.1"/>
    <property type="molecule type" value="Genomic_DNA"/>
</dbReference>
<dbReference type="PIR" id="G64090">
    <property type="entry name" value="G64090"/>
</dbReference>
<dbReference type="RefSeq" id="NP_438910.1">
    <property type="nucleotide sequence ID" value="NC_000907.1"/>
</dbReference>
<dbReference type="PDB" id="1Q98">
    <property type="method" value="X-ray"/>
    <property type="resolution" value="1.90 A"/>
    <property type="chains" value="A/B=1-165"/>
</dbReference>
<dbReference type="PDBsum" id="1Q98"/>
<dbReference type="SMR" id="Q57549"/>
<dbReference type="STRING" id="71421.HI_0751"/>
<dbReference type="EnsemblBacteria" id="AAC22410">
    <property type="protein sequence ID" value="AAC22410"/>
    <property type="gene ID" value="HI_0751"/>
</dbReference>
<dbReference type="KEGG" id="hin:HI_0751"/>
<dbReference type="PATRIC" id="fig|71421.8.peg.788"/>
<dbReference type="eggNOG" id="COG2077">
    <property type="taxonomic scope" value="Bacteria"/>
</dbReference>
<dbReference type="HOGENOM" id="CLU_042529_12_2_6"/>
<dbReference type="OrthoDB" id="9781543at2"/>
<dbReference type="PhylomeDB" id="Q57549"/>
<dbReference type="BioCyc" id="HINF71421:G1GJ1-789-MONOMER"/>
<dbReference type="EvolutionaryTrace" id="Q57549"/>
<dbReference type="Proteomes" id="UP000000579">
    <property type="component" value="Chromosome"/>
</dbReference>
<dbReference type="GO" id="GO:0008379">
    <property type="term" value="F:thioredoxin peroxidase activity"/>
    <property type="evidence" value="ECO:0007669"/>
    <property type="project" value="UniProtKB-UniRule"/>
</dbReference>
<dbReference type="CDD" id="cd03014">
    <property type="entry name" value="PRX_Atyp2cys"/>
    <property type="match status" value="1"/>
</dbReference>
<dbReference type="Gene3D" id="3.40.30.10">
    <property type="entry name" value="Glutaredoxin"/>
    <property type="match status" value="1"/>
</dbReference>
<dbReference type="HAMAP" id="MF_00269">
    <property type="entry name" value="Tpx"/>
    <property type="match status" value="1"/>
</dbReference>
<dbReference type="InterPro" id="IPR013740">
    <property type="entry name" value="Redoxin"/>
</dbReference>
<dbReference type="InterPro" id="IPR036249">
    <property type="entry name" value="Thioredoxin-like_sf"/>
</dbReference>
<dbReference type="InterPro" id="IPR013766">
    <property type="entry name" value="Thioredoxin_domain"/>
</dbReference>
<dbReference type="InterPro" id="IPR002065">
    <property type="entry name" value="TPX"/>
</dbReference>
<dbReference type="InterPro" id="IPR018219">
    <property type="entry name" value="Tpx_CS"/>
</dbReference>
<dbReference type="InterPro" id="IPR050455">
    <property type="entry name" value="Tpx_Peroxidase_subfamily"/>
</dbReference>
<dbReference type="NCBIfam" id="NF001808">
    <property type="entry name" value="PRK00522.1"/>
    <property type="match status" value="1"/>
</dbReference>
<dbReference type="PANTHER" id="PTHR43110">
    <property type="entry name" value="THIOL PEROXIDASE"/>
    <property type="match status" value="1"/>
</dbReference>
<dbReference type="PANTHER" id="PTHR43110:SF1">
    <property type="entry name" value="THIOL PEROXIDASE"/>
    <property type="match status" value="1"/>
</dbReference>
<dbReference type="Pfam" id="PF08534">
    <property type="entry name" value="Redoxin"/>
    <property type="match status" value="1"/>
</dbReference>
<dbReference type="SUPFAM" id="SSF52833">
    <property type="entry name" value="Thioredoxin-like"/>
    <property type="match status" value="1"/>
</dbReference>
<dbReference type="PROSITE" id="PS51352">
    <property type="entry name" value="THIOREDOXIN_2"/>
    <property type="match status" value="1"/>
</dbReference>
<dbReference type="PROSITE" id="PS01265">
    <property type="entry name" value="TPX"/>
    <property type="match status" value="1"/>
</dbReference>
<reference key="1">
    <citation type="journal article" date="1995" name="Science">
        <title>Whole-genome random sequencing and assembly of Haemophilus influenzae Rd.</title>
        <authorList>
            <person name="Fleischmann R.D."/>
            <person name="Adams M.D."/>
            <person name="White O."/>
            <person name="Clayton R.A."/>
            <person name="Kirkness E.F."/>
            <person name="Kerlavage A.R."/>
            <person name="Bult C.J."/>
            <person name="Tomb J.-F."/>
            <person name="Dougherty B.A."/>
            <person name="Merrick J.M."/>
            <person name="McKenney K."/>
            <person name="Sutton G.G."/>
            <person name="FitzHugh W."/>
            <person name="Fields C.A."/>
            <person name="Gocayne J.D."/>
            <person name="Scott J.D."/>
            <person name="Shirley R."/>
            <person name="Liu L.-I."/>
            <person name="Glodek A."/>
            <person name="Kelley J.M."/>
            <person name="Weidman J.F."/>
            <person name="Phillips C.A."/>
            <person name="Spriggs T."/>
            <person name="Hedblom E."/>
            <person name="Cotton M.D."/>
            <person name="Utterback T.R."/>
            <person name="Hanna M.C."/>
            <person name="Nguyen D.T."/>
            <person name="Saudek D.M."/>
            <person name="Brandon R.C."/>
            <person name="Fine L.D."/>
            <person name="Fritchman J.L."/>
            <person name="Fuhrmann J.L."/>
            <person name="Geoghagen N.S.M."/>
            <person name="Gnehm C.L."/>
            <person name="McDonald L.A."/>
            <person name="Small K.V."/>
            <person name="Fraser C.M."/>
            <person name="Smith H.O."/>
            <person name="Venter J.C."/>
        </authorList>
    </citation>
    <scope>NUCLEOTIDE SEQUENCE [LARGE SCALE GENOMIC DNA]</scope>
    <source>
        <strain>ATCC 51907 / DSM 11121 / KW20 / Rd</strain>
    </source>
</reference>
<reference key="2">
    <citation type="journal article" date="1997" name="FEBS Lett.">
        <title>Scavengase p20: a novel family of bacterial antioxidant enzymes.</title>
        <authorList>
            <person name="Wan X.Y."/>
            <person name="Zhou Y."/>
            <person name="Yan Z.Y."/>
            <person name="Wang H.L."/>
            <person name="Hou Y.D."/>
            <person name="Jin D.Y."/>
        </authorList>
    </citation>
    <scope>PROTEIN SEQUENCE OF 2-12</scope>
    <scope>FUNCTION</scope>
    <scope>CATALYTIC ACTIVITY</scope>
    <source>
        <strain>ATCC 51907 / DSM 11121 / KW20 / Rd</strain>
    </source>
</reference>
<reference key="3">
    <citation type="submission" date="2003-08" db="PDB data bank">
        <title>Structure of a thiol peroxidase from Haemophilus influenzae Rd.</title>
        <authorList>
            <person name="Kniewel R."/>
            <person name="Buglino J."/>
            <person name="Solorzano V."/>
            <person name="Wu J."/>
            <person name="Lima C.D."/>
        </authorList>
    </citation>
    <scope>X-RAY CRYSTALLOGRAPHY (1.90 ANGSTROMS)</scope>
    <scope>DISULFIDE BOND</scope>
</reference>
<gene>
    <name evidence="1" type="primary">tpx</name>
    <name type="ordered locus">HI_0751</name>
</gene>
<comment type="function">
    <text evidence="1 2">Thiol-specific peroxidase that catalyzes the reduction of hydrogen peroxide and organic hydroperoxides to water and alcohols, respectively. Plays a role in cell protection against oxidative stress by detoxifying peroxides.</text>
</comment>
<comment type="catalytic activity">
    <reaction evidence="1 2">
        <text>a hydroperoxide + [thioredoxin]-dithiol = an alcohol + [thioredoxin]-disulfide + H2O</text>
        <dbReference type="Rhea" id="RHEA:62620"/>
        <dbReference type="Rhea" id="RHEA-COMP:10698"/>
        <dbReference type="Rhea" id="RHEA-COMP:10700"/>
        <dbReference type="ChEBI" id="CHEBI:15377"/>
        <dbReference type="ChEBI" id="CHEBI:29950"/>
        <dbReference type="ChEBI" id="CHEBI:30879"/>
        <dbReference type="ChEBI" id="CHEBI:35924"/>
        <dbReference type="ChEBI" id="CHEBI:50058"/>
        <dbReference type="EC" id="1.11.1.24"/>
    </reaction>
</comment>
<comment type="subunit">
    <text evidence="1">Homodimer.</text>
</comment>
<comment type="miscellaneous">
    <text evidence="1">The active site is a conserved redox-active cysteine residue, the peroxidatic cysteine (C(P)), which makes the nucleophilic attack on the peroxide substrate. The peroxide oxidizes the C(P)-SH to cysteine sulfenic acid (C(P)-SOH), which then reacts with another cysteine residue, the resolving cysteine (C(R)), to form a disulfide bridge. The disulfide is subsequently reduced by an appropriate electron donor to complete the catalytic cycle. In this atypical 2-Cys peroxiredoxin, C(R) is present in the same subunit to form an intramolecular disulfide. The disulfide is subsequently reduced by thioredoxin.</text>
</comment>
<comment type="similarity">
    <text evidence="1">Belongs to the peroxiredoxin family. Tpx subfamily.</text>
</comment>
<keyword id="KW-0002">3D-structure</keyword>
<keyword id="KW-0049">Antioxidant</keyword>
<keyword id="KW-0903">Direct protein sequencing</keyword>
<keyword id="KW-1015">Disulfide bond</keyword>
<keyword id="KW-0560">Oxidoreductase</keyword>
<keyword id="KW-0575">Peroxidase</keyword>
<keyword id="KW-0676">Redox-active center</keyword>
<keyword id="KW-1185">Reference proteome</keyword>